<keyword id="KW-0560">Oxidoreductase</keyword>
<evidence type="ECO:0000250" key="1"/>
<evidence type="ECO:0000305" key="2"/>
<proteinExistence type="inferred from homology"/>
<protein>
    <recommendedName>
        <fullName>F420-non-reducing hydrogenase vhu subunit G</fullName>
        <ecNumber>1.12.99.-</ecNumber>
    </recommendedName>
</protein>
<comment type="subunit">
    <text evidence="1">The F420-non-reducing hydrogenase vhu is composed of four subunits; VhuA, VhuD, VhuG and VhuU.</text>
</comment>
<comment type="similarity">
    <text evidence="2">Belongs to the [NiFe]/[NiFeSe] hydrogenase small subunit family.</text>
</comment>
<organism>
    <name type="scientific">Methanococcus voltae</name>
    <dbReference type="NCBI Taxonomy" id="2188"/>
    <lineage>
        <taxon>Archaea</taxon>
        <taxon>Methanobacteriati</taxon>
        <taxon>Methanobacteriota</taxon>
        <taxon>Methanomada group</taxon>
        <taxon>Methanococci</taxon>
        <taxon>Methanococcales</taxon>
        <taxon>Methanococcaceae</taxon>
        <taxon>Methanococcus</taxon>
    </lineage>
</organism>
<accession>Q00409</accession>
<feature type="chain" id="PRO_0000204362" description="F420-non-reducing hydrogenase vhu subunit G">
    <location>
        <begin position="1"/>
        <end position="287"/>
    </location>
</feature>
<dbReference type="EC" id="1.12.99.-"/>
<dbReference type="EMBL" id="X61204">
    <property type="protein sequence ID" value="CAA43509.1"/>
    <property type="molecule type" value="Genomic_DNA"/>
</dbReference>
<dbReference type="PIR" id="C59304">
    <property type="entry name" value="C59304"/>
</dbReference>
<dbReference type="SMR" id="Q00409"/>
<dbReference type="OrthoDB" id="37913at2157"/>
<dbReference type="GO" id="GO:0051536">
    <property type="term" value="F:iron-sulfur cluster binding"/>
    <property type="evidence" value="ECO:0007669"/>
    <property type="project" value="InterPro"/>
</dbReference>
<dbReference type="GO" id="GO:0016491">
    <property type="term" value="F:oxidoreductase activity"/>
    <property type="evidence" value="ECO:0007669"/>
    <property type="project" value="UniProtKB-KW"/>
</dbReference>
<dbReference type="Gene3D" id="3.40.50.700">
    <property type="entry name" value="NADH:ubiquinone oxidoreductase-like, 20kDa subunit"/>
    <property type="match status" value="1"/>
</dbReference>
<dbReference type="InterPro" id="IPR051349">
    <property type="entry name" value="Hydrogenase_assoc-protein"/>
</dbReference>
<dbReference type="InterPro" id="IPR006137">
    <property type="entry name" value="NADH_UbQ_OxRdtase-like_20kDa"/>
</dbReference>
<dbReference type="InterPro" id="IPR037024">
    <property type="entry name" value="NiFe_Hase_small_N_sf"/>
</dbReference>
<dbReference type="NCBIfam" id="NF045875">
    <property type="entry name" value="F420_non_VhuG"/>
    <property type="match status" value="1"/>
</dbReference>
<dbReference type="PANTHER" id="PTHR42845">
    <property type="entry name" value="COENZYME F420-REDUCING HYDROGENASE, GAMMA SUBUNIT"/>
    <property type="match status" value="1"/>
</dbReference>
<dbReference type="PANTHER" id="PTHR42845:SF2">
    <property type="entry name" value="F420-NON-REDUCING HYDROGENASE VHU SUBUNIT G"/>
    <property type="match status" value="1"/>
</dbReference>
<dbReference type="Pfam" id="PF01058">
    <property type="entry name" value="Oxidored_q6"/>
    <property type="match status" value="1"/>
</dbReference>
<dbReference type="SUPFAM" id="SSF56770">
    <property type="entry name" value="HydA/Nqo6-like"/>
    <property type="match status" value="1"/>
</dbReference>
<name>VHUG_METVO</name>
<sequence length="287" mass="30914">MADKVRLGLIQLCGCSGCHISLLDLHEQLLDVLPNLEIVYAPIIADVKEIPECDVFLIEGGARNEHDEHLIHEIREKSKVVIAWGTCAVYGGIPGLGNLYSAEQLKKTVYGTETTDNVGELPSDEMVPPLTNSVMPVPSIVDVEYVIPGCPPRPEINAGAIVALLEGRDPELPKKIVCDECPRTKENVIPETFKRTFEGTPDPEKCLFEQGYTCVGMGTRAGCGALCPSAGVPCRGCYGKTDEVLDQGSSLANTYAAAGDEALKISDKSALFNRFTLPAALISKKQE</sequence>
<gene>
    <name type="primary">vhuG</name>
</gene>
<reference key="1">
    <citation type="journal article" date="1992" name="Mol. Gen. Genet.">
        <title>Methanococcus voltae harbors four gene clusters potentially encoding two [NiFe] and two [NiFeSe] hydrogenases, each of the cofactor F420-reducing or F420-non-reducing types.</title>
        <authorList>
            <person name="Halboth S."/>
            <person name="Klein A."/>
        </authorList>
    </citation>
    <scope>NUCLEOTIDE SEQUENCE [GENOMIC DNA]</scope>
    <source>
        <strain>ATCC 33273 / DSM 1537 / NBRC 100457 / OCM 70 / PS</strain>
    </source>
</reference>